<reference key="1">
    <citation type="journal article" date="2002" name="Mol. Cell. Biol.">
        <title>Identification of a human decapping complex associated with hUpf proteins in nonsense-mediated decay.</title>
        <authorList>
            <person name="Lykke-Andersen J."/>
        </authorList>
    </citation>
    <scope>NUCLEOTIDE SEQUENCE [MRNA] (ISOFORM 1)</scope>
    <scope>FUNCTION</scope>
    <scope>MUTAGENESIS OF ASP-20 AND ARG-59</scope>
    <scope>INTERACTION WITH DCP1B; DCP2 AND UPF1</scope>
    <scope>SUBCELLULAR LOCATION</scope>
    <scope>CATALYTIC ACTIVITY</scope>
</reference>
<reference key="2">
    <citation type="journal article" date="2002" name="Nat. Cell Biol.">
        <title>SMIF, a Smad4-interacting protein that functions as a co-activator in TGFbeta signalling.</title>
        <authorList>
            <person name="Bai R.-Y."/>
            <person name="Koester C."/>
            <person name="Ouyang T."/>
            <person name="Hahn S.A."/>
            <person name="Hammerschmidt M."/>
            <person name="Peschel C."/>
            <person name="Duyster J."/>
        </authorList>
    </citation>
    <scope>NUCLEOTIDE SEQUENCE [MRNA] (ISOFORM 1)</scope>
    <scope>FUNCTION</scope>
    <scope>INTERACTION WITH SMAD4</scope>
    <scope>SUBCELLULAR LOCATION</scope>
    <scope>TISSUE SPECIFICITY</scope>
    <source>
        <tissue>Pancreas</tissue>
    </source>
</reference>
<reference key="3">
    <citation type="journal article" date="2004" name="Nat. Genet.">
        <title>Complete sequencing and characterization of 21,243 full-length human cDNAs.</title>
        <authorList>
            <person name="Ota T."/>
            <person name="Suzuki Y."/>
            <person name="Nishikawa T."/>
            <person name="Otsuki T."/>
            <person name="Sugiyama T."/>
            <person name="Irie R."/>
            <person name="Wakamatsu A."/>
            <person name="Hayashi K."/>
            <person name="Sato H."/>
            <person name="Nagai K."/>
            <person name="Kimura K."/>
            <person name="Makita H."/>
            <person name="Sekine M."/>
            <person name="Obayashi M."/>
            <person name="Nishi T."/>
            <person name="Shibahara T."/>
            <person name="Tanaka T."/>
            <person name="Ishii S."/>
            <person name="Yamamoto J."/>
            <person name="Saito K."/>
            <person name="Kawai Y."/>
            <person name="Isono Y."/>
            <person name="Nakamura Y."/>
            <person name="Nagahari K."/>
            <person name="Murakami K."/>
            <person name="Yasuda T."/>
            <person name="Iwayanagi T."/>
            <person name="Wagatsuma M."/>
            <person name="Shiratori A."/>
            <person name="Sudo H."/>
            <person name="Hosoiri T."/>
            <person name="Kaku Y."/>
            <person name="Kodaira H."/>
            <person name="Kondo H."/>
            <person name="Sugawara M."/>
            <person name="Takahashi M."/>
            <person name="Kanda K."/>
            <person name="Yokoi T."/>
            <person name="Furuya T."/>
            <person name="Kikkawa E."/>
            <person name="Omura Y."/>
            <person name="Abe K."/>
            <person name="Kamihara K."/>
            <person name="Katsuta N."/>
            <person name="Sato K."/>
            <person name="Tanikawa M."/>
            <person name="Yamazaki M."/>
            <person name="Ninomiya K."/>
            <person name="Ishibashi T."/>
            <person name="Yamashita H."/>
            <person name="Murakawa K."/>
            <person name="Fujimori K."/>
            <person name="Tanai H."/>
            <person name="Kimata M."/>
            <person name="Watanabe M."/>
            <person name="Hiraoka S."/>
            <person name="Chiba Y."/>
            <person name="Ishida S."/>
            <person name="Ono Y."/>
            <person name="Takiguchi S."/>
            <person name="Watanabe S."/>
            <person name="Yosida M."/>
            <person name="Hotuta T."/>
            <person name="Kusano J."/>
            <person name="Kanehori K."/>
            <person name="Takahashi-Fujii A."/>
            <person name="Hara H."/>
            <person name="Tanase T.-O."/>
            <person name="Nomura Y."/>
            <person name="Togiya S."/>
            <person name="Komai F."/>
            <person name="Hara R."/>
            <person name="Takeuchi K."/>
            <person name="Arita M."/>
            <person name="Imose N."/>
            <person name="Musashino K."/>
            <person name="Yuuki H."/>
            <person name="Oshima A."/>
            <person name="Sasaki N."/>
            <person name="Aotsuka S."/>
            <person name="Yoshikawa Y."/>
            <person name="Matsunawa H."/>
            <person name="Ichihara T."/>
            <person name="Shiohata N."/>
            <person name="Sano S."/>
            <person name="Moriya S."/>
            <person name="Momiyama H."/>
            <person name="Satoh N."/>
            <person name="Takami S."/>
            <person name="Terashima Y."/>
            <person name="Suzuki O."/>
            <person name="Nakagawa S."/>
            <person name="Senoh A."/>
            <person name="Mizoguchi H."/>
            <person name="Goto Y."/>
            <person name="Shimizu F."/>
            <person name="Wakebe H."/>
            <person name="Hishigaki H."/>
            <person name="Watanabe T."/>
            <person name="Sugiyama A."/>
            <person name="Takemoto M."/>
            <person name="Kawakami B."/>
            <person name="Yamazaki M."/>
            <person name="Watanabe K."/>
            <person name="Kumagai A."/>
            <person name="Itakura S."/>
            <person name="Fukuzumi Y."/>
            <person name="Fujimori Y."/>
            <person name="Komiyama M."/>
            <person name="Tashiro H."/>
            <person name="Tanigami A."/>
            <person name="Fujiwara T."/>
            <person name="Ono T."/>
            <person name="Yamada K."/>
            <person name="Fujii Y."/>
            <person name="Ozaki K."/>
            <person name="Hirao M."/>
            <person name="Ohmori Y."/>
            <person name="Kawabata A."/>
            <person name="Hikiji T."/>
            <person name="Kobatake N."/>
            <person name="Inagaki H."/>
            <person name="Ikema Y."/>
            <person name="Okamoto S."/>
            <person name="Okitani R."/>
            <person name="Kawakami T."/>
            <person name="Noguchi S."/>
            <person name="Itoh T."/>
            <person name="Shigeta K."/>
            <person name="Senba T."/>
            <person name="Matsumura K."/>
            <person name="Nakajima Y."/>
            <person name="Mizuno T."/>
            <person name="Morinaga M."/>
            <person name="Sasaki M."/>
            <person name="Togashi T."/>
            <person name="Oyama M."/>
            <person name="Hata H."/>
            <person name="Watanabe M."/>
            <person name="Komatsu T."/>
            <person name="Mizushima-Sugano J."/>
            <person name="Satoh T."/>
            <person name="Shirai Y."/>
            <person name="Takahashi Y."/>
            <person name="Nakagawa K."/>
            <person name="Okumura K."/>
            <person name="Nagase T."/>
            <person name="Nomura N."/>
            <person name="Kikuchi H."/>
            <person name="Masuho Y."/>
            <person name="Yamashita R."/>
            <person name="Nakai K."/>
            <person name="Yada T."/>
            <person name="Nakamura Y."/>
            <person name="Ohara O."/>
            <person name="Isogai T."/>
            <person name="Sugano S."/>
        </authorList>
    </citation>
    <scope>NUCLEOTIDE SEQUENCE [LARGE SCALE MRNA] (ISOFORMS 1 AND 2)</scope>
    <source>
        <tissue>Caudate nucleus</tissue>
        <tissue>Placenta</tissue>
    </source>
</reference>
<reference key="4">
    <citation type="journal article" date="2006" name="Nature">
        <title>The DNA sequence, annotation and analysis of human chromosome 3.</title>
        <authorList>
            <person name="Muzny D.M."/>
            <person name="Scherer S.E."/>
            <person name="Kaul R."/>
            <person name="Wang J."/>
            <person name="Yu J."/>
            <person name="Sudbrak R."/>
            <person name="Buhay C.J."/>
            <person name="Chen R."/>
            <person name="Cree A."/>
            <person name="Ding Y."/>
            <person name="Dugan-Rocha S."/>
            <person name="Gill R."/>
            <person name="Gunaratne P."/>
            <person name="Harris R.A."/>
            <person name="Hawes A.C."/>
            <person name="Hernandez J."/>
            <person name="Hodgson A.V."/>
            <person name="Hume J."/>
            <person name="Jackson A."/>
            <person name="Khan Z.M."/>
            <person name="Kovar-Smith C."/>
            <person name="Lewis L.R."/>
            <person name="Lozado R.J."/>
            <person name="Metzker M.L."/>
            <person name="Milosavljevic A."/>
            <person name="Miner G.R."/>
            <person name="Morgan M.B."/>
            <person name="Nazareth L.V."/>
            <person name="Scott G."/>
            <person name="Sodergren E."/>
            <person name="Song X.-Z."/>
            <person name="Steffen D."/>
            <person name="Wei S."/>
            <person name="Wheeler D.A."/>
            <person name="Wright M.W."/>
            <person name="Worley K.C."/>
            <person name="Yuan Y."/>
            <person name="Zhang Z."/>
            <person name="Adams C.Q."/>
            <person name="Ansari-Lari M.A."/>
            <person name="Ayele M."/>
            <person name="Brown M.J."/>
            <person name="Chen G."/>
            <person name="Chen Z."/>
            <person name="Clendenning J."/>
            <person name="Clerc-Blankenburg K.P."/>
            <person name="Chen R."/>
            <person name="Chen Z."/>
            <person name="Davis C."/>
            <person name="Delgado O."/>
            <person name="Dinh H.H."/>
            <person name="Dong W."/>
            <person name="Draper H."/>
            <person name="Ernst S."/>
            <person name="Fu G."/>
            <person name="Gonzalez-Garay M.L."/>
            <person name="Garcia D.K."/>
            <person name="Gillett W."/>
            <person name="Gu J."/>
            <person name="Hao B."/>
            <person name="Haugen E."/>
            <person name="Havlak P."/>
            <person name="He X."/>
            <person name="Hennig S."/>
            <person name="Hu S."/>
            <person name="Huang W."/>
            <person name="Jackson L.R."/>
            <person name="Jacob L.S."/>
            <person name="Kelly S.H."/>
            <person name="Kube M."/>
            <person name="Levy R."/>
            <person name="Li Z."/>
            <person name="Liu B."/>
            <person name="Liu J."/>
            <person name="Liu W."/>
            <person name="Lu J."/>
            <person name="Maheshwari M."/>
            <person name="Nguyen B.-V."/>
            <person name="Okwuonu G.O."/>
            <person name="Palmeiri A."/>
            <person name="Pasternak S."/>
            <person name="Perez L.M."/>
            <person name="Phelps K.A."/>
            <person name="Plopper F.J."/>
            <person name="Qiang B."/>
            <person name="Raymond C."/>
            <person name="Rodriguez R."/>
            <person name="Saenphimmachak C."/>
            <person name="Santibanez J."/>
            <person name="Shen H."/>
            <person name="Shen Y."/>
            <person name="Subramanian S."/>
            <person name="Tabor P.E."/>
            <person name="Verduzco D."/>
            <person name="Waldron L."/>
            <person name="Wang J."/>
            <person name="Wang J."/>
            <person name="Wang Q."/>
            <person name="Williams G.A."/>
            <person name="Wong G.K.-S."/>
            <person name="Yao Z."/>
            <person name="Zhang J."/>
            <person name="Zhang X."/>
            <person name="Zhao G."/>
            <person name="Zhou J."/>
            <person name="Zhou Y."/>
            <person name="Nelson D."/>
            <person name="Lehrach H."/>
            <person name="Reinhardt R."/>
            <person name="Naylor S.L."/>
            <person name="Yang H."/>
            <person name="Olson M."/>
            <person name="Weinstock G."/>
            <person name="Gibbs R.A."/>
        </authorList>
    </citation>
    <scope>NUCLEOTIDE SEQUENCE [LARGE SCALE GENOMIC DNA]</scope>
</reference>
<reference key="5">
    <citation type="journal article" date="2004" name="Genome Res.">
        <title>The status, quality, and expansion of the NIH full-length cDNA project: the Mammalian Gene Collection (MGC).</title>
        <authorList>
            <consortium name="The MGC Project Team"/>
        </authorList>
    </citation>
    <scope>NUCLEOTIDE SEQUENCE [LARGE SCALE MRNA] (ISOFORM 1)</scope>
    <source>
        <tissue>Muscle</tissue>
    </source>
</reference>
<reference key="6">
    <citation type="journal article" date="2002" name="RNA">
        <title>The human LSm1-7 proteins colocalize with the mRNA-degrading enzymes Dcp1/2 and Xrnl in distinct cytoplasmic foci.</title>
        <authorList>
            <person name="Ingelfinger D."/>
            <person name="Arndt-Jovin D.J."/>
            <person name="Luehrmann R."/>
            <person name="Achsel T."/>
        </authorList>
    </citation>
    <scope>SUBCELLULAR LOCATION</scope>
    <scope>INTERACTION WITH A COMPLEX CONTAINING ENZYMES INVOLVED IN MRNA DECAY</scope>
</reference>
<reference key="7">
    <citation type="journal article" date="2005" name="Genes Dev.">
        <title>Recruitment and activation of mRNA decay enzymes by two ARE-mediated decay activation domains in the proteins TTP and BRF-1.</title>
        <authorList>
            <person name="Lykke-Andersen J."/>
            <person name="Wagner E."/>
        </authorList>
    </citation>
    <scope>INTERACTION WITH ZFP36L1</scope>
</reference>
<reference key="8">
    <citation type="journal article" date="2005" name="Mol. Cell">
        <title>Multiple processing body factors and the ARE binding protein TTP activate mRNA decapping.</title>
        <authorList>
            <person name="Fenger-Groen M."/>
            <person name="Fillman C."/>
            <person name="Norrild B."/>
            <person name="Lykke-Andersen J."/>
        </authorList>
    </citation>
    <scope>INTERACTION WITH EDC3; DCP2; EDC4 AND DDX6</scope>
    <scope>SUBCELLULAR LOCATION</scope>
</reference>
<reference key="9">
    <citation type="journal article" date="2006" name="Cell">
        <title>Global, in vivo, and site-specific phosphorylation dynamics in signaling networks.</title>
        <authorList>
            <person name="Olsen J.V."/>
            <person name="Blagoev B."/>
            <person name="Gnad F."/>
            <person name="Macek B."/>
            <person name="Kumar C."/>
            <person name="Mortensen P."/>
            <person name="Mann M."/>
        </authorList>
    </citation>
    <scope>PHOSPHORYLATION [LARGE SCALE ANALYSIS] AT SER-353</scope>
    <scope>IDENTIFICATION BY MASS SPECTROMETRY [LARGE SCALE ANALYSIS]</scope>
    <source>
        <tissue>Cervix carcinoma</tissue>
    </source>
</reference>
<reference key="10">
    <citation type="journal article" date="2008" name="J. Proteome Res.">
        <title>Combining protein-based IMAC, peptide-based IMAC, and MudPIT for efficient phosphoproteomic analysis.</title>
        <authorList>
            <person name="Cantin G.T."/>
            <person name="Yi W."/>
            <person name="Lu B."/>
            <person name="Park S.K."/>
            <person name="Xu T."/>
            <person name="Lee J.-D."/>
            <person name="Yates J.R. III"/>
        </authorList>
    </citation>
    <scope>PHOSPHORYLATION [LARGE SCALE ANALYSIS] AT SER-315; SER-334 AND THR-531</scope>
    <scope>IDENTIFICATION BY MASS SPECTROMETRY [LARGE SCALE ANALYSIS]</scope>
    <source>
        <tissue>Cervix carcinoma</tissue>
    </source>
</reference>
<reference key="11">
    <citation type="journal article" date="2008" name="Mol. Cell">
        <title>Kinase-selective enrichment enables quantitative phosphoproteomics of the kinome across the cell cycle.</title>
        <authorList>
            <person name="Daub H."/>
            <person name="Olsen J.V."/>
            <person name="Bairlein M."/>
            <person name="Gnad F."/>
            <person name="Oppermann F.S."/>
            <person name="Korner R."/>
            <person name="Greff Z."/>
            <person name="Keri G."/>
            <person name="Stemmann O."/>
            <person name="Mann M."/>
        </authorList>
    </citation>
    <scope>PHOSPHORYLATION [LARGE SCALE ANALYSIS] AT SER-315 AND SER-353</scope>
    <scope>IDENTIFICATION BY MASS SPECTROMETRY [LARGE SCALE ANALYSIS]</scope>
    <source>
        <tissue>Cervix carcinoma</tissue>
    </source>
</reference>
<reference key="12">
    <citation type="journal article" date="2008" name="Proc. Natl. Acad. Sci. U.S.A.">
        <title>A quantitative atlas of mitotic phosphorylation.</title>
        <authorList>
            <person name="Dephoure N."/>
            <person name="Zhou C."/>
            <person name="Villen J."/>
            <person name="Beausoleil S.A."/>
            <person name="Bakalarski C.E."/>
            <person name="Elledge S.J."/>
            <person name="Gygi S.P."/>
        </authorList>
    </citation>
    <scope>PHOSPHORYLATION [LARGE SCALE ANALYSIS] AT SER-142; SER-315; SER-319; SER-334; SER-353; THR-401; SER-522; SER-523; SER-525 AND THR-531</scope>
    <scope>IDENTIFICATION BY MASS SPECTROMETRY [LARGE SCALE ANALYSIS]</scope>
    <source>
        <tissue>Cervix carcinoma</tissue>
    </source>
</reference>
<reference key="13">
    <citation type="journal article" date="2009" name="Anal. Chem.">
        <title>Lys-N and trypsin cover complementary parts of the phosphoproteome in a refined SCX-based approach.</title>
        <authorList>
            <person name="Gauci S."/>
            <person name="Helbig A.O."/>
            <person name="Slijper M."/>
            <person name="Krijgsveld J."/>
            <person name="Heck A.J."/>
            <person name="Mohammed S."/>
        </authorList>
    </citation>
    <scope>IDENTIFICATION BY MASS SPECTROMETRY [LARGE SCALE ANALYSIS]</scope>
</reference>
<reference key="14">
    <citation type="journal article" date="2009" name="Mol. Cell">
        <title>Human proline-rich nuclear receptor coregulatory protein 2 mediates an interaction between mRNA surveillance machinery and decapping complex.</title>
        <authorList>
            <person name="Cho H."/>
            <person name="Kim K.M."/>
            <person name="Kim Y.K."/>
        </authorList>
    </citation>
    <scope>INTERACTION WITH PNRC2</scope>
</reference>
<reference key="15">
    <citation type="journal article" date="2009" name="Sci. Signal.">
        <title>Quantitative phosphoproteomic analysis of T cell receptor signaling reveals system-wide modulation of protein-protein interactions.</title>
        <authorList>
            <person name="Mayya V."/>
            <person name="Lundgren D.H."/>
            <person name="Hwang S.-I."/>
            <person name="Rezaul K."/>
            <person name="Wu L."/>
            <person name="Eng J.K."/>
            <person name="Rodionov V."/>
            <person name="Han D.K."/>
        </authorList>
    </citation>
    <scope>PHOSPHORYLATION [LARGE SCALE ANALYSIS] AT SER-180; SER-315; SER-319; SER-522; SER-523; SER-525 AND THR-531</scope>
    <scope>IDENTIFICATION BY MASS SPECTROMETRY [LARGE SCALE ANALYSIS]</scope>
    <source>
        <tissue>Leukemic T-cell</tissue>
    </source>
</reference>
<reference key="16">
    <citation type="journal article" date="2010" name="Sci. Signal.">
        <title>Quantitative phosphoproteomics reveals widespread full phosphorylation site occupancy during mitosis.</title>
        <authorList>
            <person name="Olsen J.V."/>
            <person name="Vermeulen M."/>
            <person name="Santamaria A."/>
            <person name="Kumar C."/>
            <person name="Miller M.L."/>
            <person name="Jensen L.J."/>
            <person name="Gnad F."/>
            <person name="Cox J."/>
            <person name="Jensen T.S."/>
            <person name="Nigg E.A."/>
            <person name="Brunak S."/>
            <person name="Mann M."/>
        </authorList>
    </citation>
    <scope>PHOSPHORYLATION [LARGE SCALE ANALYSIS] AT SER-315; SER-319; SER-353 AND SER-422</scope>
    <scope>IDENTIFICATION BY MASS SPECTROMETRY [LARGE SCALE ANALYSIS]</scope>
    <source>
        <tissue>Cervix carcinoma</tissue>
    </source>
</reference>
<reference key="17">
    <citation type="journal article" date="2011" name="BMC Syst. Biol.">
        <title>Initial characterization of the human central proteome.</title>
        <authorList>
            <person name="Burkard T.R."/>
            <person name="Planyavsky M."/>
            <person name="Kaupe I."/>
            <person name="Breitwieser F.P."/>
            <person name="Buerckstuemmer T."/>
            <person name="Bennett K.L."/>
            <person name="Superti-Furga G."/>
            <person name="Colinge J."/>
        </authorList>
    </citation>
    <scope>IDENTIFICATION BY MASS SPECTROMETRY [LARGE SCALE ANALYSIS]</scope>
</reference>
<reference key="18">
    <citation type="journal article" date="2011" name="Proc. Natl. Acad. Sci. U.S.A.">
        <title>Zinc-finger antiviral protein inhibits HIV-1 infection by selectively targeting multiply spliced viral mRNAs for degradation.</title>
        <authorList>
            <person name="Zhu Y."/>
            <person name="Chen G."/>
            <person name="Lv F."/>
            <person name="Wang X."/>
            <person name="Ji X."/>
            <person name="Xu Y."/>
            <person name="Sun J."/>
            <person name="Wu L."/>
            <person name="Zheng Y.T."/>
            <person name="Gao G."/>
        </authorList>
    </citation>
    <scope>INTERACTION WITH ZC3HAV1 AND DDX17</scope>
</reference>
<reference key="19">
    <citation type="journal article" date="2011" name="Sci. Signal.">
        <title>System-wide temporal characterization of the proteome and phosphoproteome of human embryonic stem cell differentiation.</title>
        <authorList>
            <person name="Rigbolt K.T."/>
            <person name="Prokhorova T.A."/>
            <person name="Akimov V."/>
            <person name="Henningsen J."/>
            <person name="Johansen P.T."/>
            <person name="Kratchmarova I."/>
            <person name="Kassem M."/>
            <person name="Mann M."/>
            <person name="Olsen J.V."/>
            <person name="Blagoev B."/>
        </authorList>
    </citation>
    <scope>PHOSPHORYLATION [LARGE SCALE ANALYSIS] AT SER-315</scope>
    <scope>IDENTIFICATION BY MASS SPECTROMETRY [LARGE SCALE ANALYSIS]</scope>
</reference>
<reference key="20">
    <citation type="journal article" date="2013" name="J. Proteome Res.">
        <title>Toward a comprehensive characterization of a human cancer cell phosphoproteome.</title>
        <authorList>
            <person name="Zhou H."/>
            <person name="Di Palma S."/>
            <person name="Preisinger C."/>
            <person name="Peng M."/>
            <person name="Polat A.N."/>
            <person name="Heck A.J."/>
            <person name="Mohammed S."/>
        </authorList>
    </citation>
    <scope>PHOSPHORYLATION [LARGE SCALE ANALYSIS] AT SER-62; SER-315; THR-348; SER-353; THR-401; SER-522; SER-523; SER-525 AND THR-531</scope>
    <scope>IDENTIFICATION BY MASS SPECTROMETRY [LARGE SCALE ANALYSIS]</scope>
    <source>
        <tissue>Cervix carcinoma</tissue>
        <tissue>Erythroleukemia</tissue>
    </source>
</reference>
<reference key="21">
    <citation type="journal article" date="2014" name="Cell Rep.">
        <title>The RNA helicase DHX34 activates NMD by promoting a transition from the surveillance to the decay-inducing complex.</title>
        <authorList>
            <person name="Hug N."/>
            <person name="Caceres J.F."/>
        </authorList>
    </citation>
    <scope>INTERACTION WITH DHX34</scope>
</reference>
<reference key="22">
    <citation type="journal article" date="2014" name="J. Proteomics">
        <title>An enzyme assisted RP-RPLC approach for in-depth analysis of human liver phosphoproteome.</title>
        <authorList>
            <person name="Bian Y."/>
            <person name="Song C."/>
            <person name="Cheng K."/>
            <person name="Dong M."/>
            <person name="Wang F."/>
            <person name="Huang J."/>
            <person name="Sun D."/>
            <person name="Wang L."/>
            <person name="Ye M."/>
            <person name="Zou H."/>
        </authorList>
    </citation>
    <scope>PHOSPHORYLATION [LARGE SCALE ANALYSIS] AT SER-353</scope>
    <scope>IDENTIFICATION BY MASS SPECTROMETRY [LARGE SCALE ANALYSIS]</scope>
    <source>
        <tissue>Liver</tissue>
    </source>
</reference>
<reference key="23">
    <citation type="journal article" date="2014" name="Mol. Cell. Proteomics">
        <title>Immunoaffinity enrichment and mass spectrometry analysis of protein methylation.</title>
        <authorList>
            <person name="Guo A."/>
            <person name="Gu H."/>
            <person name="Zhou J."/>
            <person name="Mulhern D."/>
            <person name="Wang Y."/>
            <person name="Lee K.A."/>
            <person name="Yang V."/>
            <person name="Aguiar M."/>
            <person name="Kornhauser J."/>
            <person name="Jia X."/>
            <person name="Ren J."/>
            <person name="Beausoleil S.A."/>
            <person name="Silva J.C."/>
            <person name="Vemulapalli V."/>
            <person name="Bedford M.T."/>
            <person name="Comb M.J."/>
        </authorList>
    </citation>
    <scope>METHYLATION [LARGE SCALE ANALYSIS] AT ARG-376</scope>
    <scope>IDENTIFICATION BY MASS SPECTROMETRY [LARGE SCALE ANALYSIS]</scope>
    <source>
        <tissue>Colon carcinoma</tissue>
    </source>
</reference>
<reference key="24">
    <citation type="journal article" date="2017" name="Nat. Chem. Biol.">
        <title>A human microprotein that interacts with the mRNA decapping complex.</title>
        <authorList>
            <person name="D'Lima N.G."/>
            <person name="Ma J."/>
            <person name="Winkler L."/>
            <person name="Chu Q."/>
            <person name="Loh K.H."/>
            <person name="Corpuz E.O."/>
            <person name="Budnik B.A."/>
            <person name="Lykke-Andersen J."/>
            <person name="Saghatelian A."/>
            <person name="Slavoff S.A."/>
        </authorList>
    </citation>
    <scope>INTERACTION WITH NBDY</scope>
</reference>
<reference key="25">
    <citation type="journal article" date="2018" name="J. Virol.">
        <title>Rotavirus Induces Formation of Remodeled Stress Granules and P Bodies and Their Sequestration in Viroplasms To Promote Progeny Virus Production.</title>
        <authorList>
            <person name="Dhillon P."/>
            <person name="Rao C.D."/>
        </authorList>
    </citation>
    <scope>INTERACTION WITH ROTAVIRUS A NON-STRUCTURAL PROTEIN 2 (MICROBIAL INFECTION)</scope>
    <scope>INTERACTION WITH ROTAVIRUS A NON-STRUCTURAL PROTEIN 5 (MICROBIAL INFECTION)</scope>
</reference>
<reference key="26">
    <citation type="journal article" date="2021" name="Biochem. Biophys. Res. Commun.">
        <title>mRNA decapping factor Dcp1a is essential for embryonic growth in mice.</title>
        <authorList>
            <person name="Ibayashi M."/>
            <person name="Aizawa R."/>
            <person name="Tsukamoto S."/>
        </authorList>
    </citation>
    <scope>FUNCTION</scope>
</reference>
<accession>Q9NPI6</accession>
<accession>B4DHN9</accession>
<accession>U3KQM8</accession>
<name>DCP1A_HUMAN</name>
<comment type="function">
    <text evidence="3 4 13">Necessary for the degradation of mRNAs, both in normal mRNA turnover and in nonsense-mediated mRNA decay (PubMed:12417715). Removes the 7-methyl guanine cap structure from mRNA molecules, yielding a 5'-phosphorylated mRNA fragment and 7m-GDP (PubMed:12417715). Contributes to the transactivation of target genes after stimulation by TGFB1 (PubMed:11836524). Essential for embryonic development (PubMed:33813271).</text>
</comment>
<comment type="catalytic activity">
    <reaction evidence="4">
        <text>a 5'-end (N(7)-methyl 5'-triphosphoguanosine)-ribonucleoside in mRNA + H2O = N(7)-methyl-GDP + a 5'-end phospho-ribonucleoside in mRNA + 2 H(+)</text>
        <dbReference type="Rhea" id="RHEA:67484"/>
        <dbReference type="Rhea" id="RHEA-COMP:15692"/>
        <dbReference type="Rhea" id="RHEA-COMP:17167"/>
        <dbReference type="ChEBI" id="CHEBI:15377"/>
        <dbReference type="ChEBI" id="CHEBI:15378"/>
        <dbReference type="ChEBI" id="CHEBI:63714"/>
        <dbReference type="ChEBI" id="CHEBI:138282"/>
        <dbReference type="ChEBI" id="CHEBI:156461"/>
        <dbReference type="EC" id="3.6.1.62"/>
    </reaction>
    <physiologicalReaction direction="left-to-right" evidence="16">
        <dbReference type="Rhea" id="RHEA:67485"/>
    </physiologicalReaction>
</comment>
<comment type="subunit">
    <text evidence="12">(Microbial infection) Interacts with rotavirus A non-structural protein 2; this interaction probably plays a role in the sequestration of DCP1A in viral factories (PubMed:30258011). Interacts with rotavirus A non-structural protein 5; this interaction probably plays a role in its sequestration in viral factories (PubMed:30258011).</text>
</comment>
<comment type="subunit">
    <text evidence="3 4 5 6 7 8 9 10 11">Forms a complex with EDC3, DCP2, DDX6 and EDC4/HEDLS, within this complex directly interacts with EDC3 (PubMed:16364915). Part of a cytoplasmic complex containing proteins involved in mRNA decay, including XRN1 and LSM1 (PubMed:12515382). Interacts with DCP1B (PubMed:12417715). Interacts with DCP2 (PubMed:12417715). Interacts with DDX17 in an RNA-independent manner (PubMed:21876179). Interacts with PNRC2 (PubMed:19150429). Interacts with SMAD4 (PubMed:11836524). Interacts with UPF1 (PubMed:12417715). Interacts with ZC3HAV1 (PubMed:21876179). Interacts with ZFP36L1 (PubMed:15687258). Interacts with NBDY (PubMed:27918561). Interacts with DHX34; the interaction is RNA-independent (PubMed:25220460).</text>
</comment>
<comment type="interaction">
    <interactant intactId="EBI-374238">
        <id>Q9NPI6</id>
    </interactant>
    <interactant intactId="EBI-2949658">
        <id>O95429</id>
        <label>BAG4</label>
    </interactant>
    <organismsDiffer>false</organismsDiffer>
    <experiments>6</experiments>
</comment>
<comment type="interaction">
    <interactant intactId="EBI-374238">
        <id>Q9NPI6</id>
    </interactant>
    <interactant intactId="EBI-374238">
        <id>Q9NPI6</id>
        <label>DCP1A</label>
    </interactant>
    <organismsDiffer>false</organismsDiffer>
    <experiments>9</experiments>
</comment>
<comment type="interaction">
    <interactant intactId="EBI-374238">
        <id>Q9NPI6</id>
    </interactant>
    <interactant intactId="EBI-521595">
        <id>Q8IZD4</id>
        <label>DCP1B</label>
    </interactant>
    <organismsDiffer>false</organismsDiffer>
    <experiments>10</experiments>
</comment>
<comment type="interaction">
    <interactant intactId="EBI-374238">
        <id>Q9NPI6</id>
    </interactant>
    <interactant intactId="EBI-521577">
        <id>Q8IU60</id>
        <label>DCP2</label>
    </interactant>
    <organismsDiffer>false</organismsDiffer>
    <experiments>18</experiments>
</comment>
<comment type="interaction">
    <interactant intactId="EBI-374238">
        <id>Q9NPI6</id>
    </interactant>
    <interactant intactId="EBI-351257">
        <id>P26196</id>
        <label>DDX6</label>
    </interactant>
    <organismsDiffer>false</organismsDiffer>
    <experiments>13</experiments>
</comment>
<comment type="interaction">
    <interactant intactId="EBI-374238">
        <id>Q9NPI6</id>
    </interactant>
    <interactant intactId="EBI-997311">
        <id>Q96F86</id>
        <label>EDC3</label>
    </interactant>
    <organismsDiffer>false</organismsDiffer>
    <experiments>19</experiments>
</comment>
<comment type="interaction">
    <interactant intactId="EBI-374238">
        <id>Q9NPI6</id>
    </interactant>
    <interactant intactId="EBI-1006038">
        <id>Q6P2E9</id>
        <label>EDC4</label>
    </interactant>
    <organismsDiffer>false</organismsDiffer>
    <experiments>12</experiments>
</comment>
<comment type="interaction">
    <interactant intactId="EBI-374238">
        <id>Q9NPI6</id>
    </interactant>
    <interactant intactId="EBI-701903">
        <id>Q14192</id>
        <label>FHL2</label>
    </interactant>
    <organismsDiffer>false</organismsDiffer>
    <experiments>10</experiments>
</comment>
<comment type="interaction">
    <interactant intactId="EBI-374238">
        <id>Q9NPI6</id>
    </interactant>
    <interactant intactId="EBI-27058088">
        <id>A0A0U1RRE5</id>
        <label>NBDY</label>
    </interactant>
    <organismsDiffer>false</organismsDiffer>
    <experiments>4</experiments>
</comment>
<comment type="interaction">
    <interactant intactId="EBI-374238">
        <id>Q9NPI6</id>
    </interactant>
    <interactant intactId="EBI-2947053">
        <id>Q92636</id>
        <label>NSMAF</label>
    </interactant>
    <organismsDiffer>false</organismsDiffer>
    <experiments>2</experiments>
</comment>
<comment type="interaction">
    <interactant intactId="EBI-374238">
        <id>Q9NPI6</id>
    </interactant>
    <interactant intactId="EBI-2562092">
        <id>Q86TB9</id>
        <label>PATL1</label>
    </interactant>
    <organismsDiffer>false</organismsDiffer>
    <experiments>2</experiments>
</comment>
<comment type="interaction">
    <interactant intactId="EBI-374238">
        <id>Q9NPI6</id>
    </interactant>
    <interactant intactId="EBI-726549">
        <id>Q9NPJ4</id>
        <label>PNRC2</label>
    </interactant>
    <organismsDiffer>false</organismsDiffer>
    <experiments>12</experiments>
</comment>
<comment type="interaction">
    <interactant intactId="EBI-374238">
        <id>Q9NPI6</id>
    </interactant>
    <interactant intactId="EBI-16018718">
        <id>Q9NPJ4-1</id>
        <label>PNRC2</label>
    </interactant>
    <organismsDiffer>false</organismsDiffer>
    <experiments>6</experiments>
</comment>
<comment type="interaction">
    <interactant intactId="EBI-374238">
        <id>Q9NPI6</id>
    </interactant>
    <interactant intactId="EBI-706448">
        <id>P43351</id>
        <label>RAD52</label>
    </interactant>
    <organismsDiffer>false</organismsDiffer>
    <experiments>5</experiments>
</comment>
<comment type="interaction">
    <interactant intactId="EBI-374238">
        <id>Q9NPI6</id>
    </interactant>
    <interactant intactId="EBI-2836148">
        <id>Q96K30</id>
        <label>RITA1</label>
    </interactant>
    <organismsDiffer>false</organismsDiffer>
    <experiments>4</experiments>
</comment>
<comment type="interaction">
    <interactant intactId="EBI-374238">
        <id>Q9NPI6</id>
    </interactant>
    <interactant intactId="EBI-347263">
        <id>Q13485</id>
        <label>SMAD4</label>
    </interactant>
    <organismsDiffer>false</organismsDiffer>
    <experiments>5</experiments>
</comment>
<comment type="interaction">
    <interactant intactId="EBI-374238">
        <id>Q9NPI6</id>
    </interactant>
    <interactant intactId="EBI-373471">
        <id>Q92900</id>
        <label>UPF1</label>
    </interactant>
    <organismsDiffer>false</organismsDiffer>
    <experiments>13</experiments>
</comment>
<comment type="interaction">
    <interactant intactId="EBI-374238">
        <id>Q9NPI6</id>
    </interactant>
    <interactant intactId="EBI-347088">
        <id>P63104</id>
        <label>YWHAZ</label>
    </interactant>
    <organismsDiffer>false</organismsDiffer>
    <experiments>2</experiments>
</comment>
<comment type="interaction">
    <interactant intactId="EBI-374238">
        <id>Q9NPI6</id>
    </interactant>
    <interactant intactId="EBI-374248">
        <id>P26651</id>
        <label>ZFP36</label>
    </interactant>
    <organismsDiffer>false</organismsDiffer>
    <experiments>2</experiments>
</comment>
<comment type="interaction">
    <interactant intactId="EBI-374238">
        <id>Q9NPI6</id>
    </interactant>
    <interactant intactId="EBI-3386960">
        <id>F4HZB2</id>
        <label>SPI</label>
    </interactant>
    <organismsDiffer>true</organismsDiffer>
    <experiments>2</experiments>
</comment>
<comment type="subcellular location">
    <subcellularLocation>
        <location evidence="4 5 7">Cytoplasm</location>
        <location evidence="4 5 7">P-body</location>
    </subcellularLocation>
    <subcellularLocation>
        <location evidence="3 4">Nucleus</location>
    </subcellularLocation>
    <text evidence="1 3 7">Co-localizes with NANOS3 in the processing bodies (By similarity). Predominantly cytoplasmic, in processing bodies (PB) (PubMed:16364915). Nuclear, after TGFB1 treatment. Translocation to the nucleus depends on interaction with SMAD4 (PubMed:11836524).</text>
</comment>
<comment type="alternative products">
    <event type="alternative splicing"/>
    <isoform>
        <id>Q9NPI6-1</id>
        <name>1</name>
        <sequence type="displayed"/>
    </isoform>
    <isoform>
        <id>Q9NPI6-2</id>
        <name>2</name>
        <sequence type="described" ref="VSP_057206"/>
    </isoform>
</comment>
<comment type="tissue specificity">
    <text evidence="3">Detected in heart, brain, placenta, lung, skeletal muscle, liver, kidney and pancreas.</text>
</comment>
<comment type="similarity">
    <text evidence="15">Belongs to the DCP1 family.</text>
</comment>
<keyword id="KW-0002">3D-structure</keyword>
<keyword id="KW-0025">Alternative splicing</keyword>
<keyword id="KW-0963">Cytoplasm</keyword>
<keyword id="KW-0378">Hydrolase</keyword>
<keyword id="KW-0488">Methylation</keyword>
<keyword id="KW-0866">Nonsense-mediated mRNA decay</keyword>
<keyword id="KW-0539">Nucleus</keyword>
<keyword id="KW-0597">Phosphoprotein</keyword>
<keyword id="KW-1267">Proteomics identification</keyword>
<keyword id="KW-1185">Reference proteome</keyword>
<evidence type="ECO:0000250" key="1">
    <source>
        <dbReference type="UniProtKB" id="Q91YD3"/>
    </source>
</evidence>
<evidence type="ECO:0000256" key="2">
    <source>
        <dbReference type="SAM" id="MobiDB-lite"/>
    </source>
</evidence>
<evidence type="ECO:0000269" key="3">
    <source>
    </source>
</evidence>
<evidence type="ECO:0000269" key="4">
    <source>
    </source>
</evidence>
<evidence type="ECO:0000269" key="5">
    <source>
    </source>
</evidence>
<evidence type="ECO:0000269" key="6">
    <source>
    </source>
</evidence>
<evidence type="ECO:0000269" key="7">
    <source>
    </source>
</evidence>
<evidence type="ECO:0000269" key="8">
    <source>
    </source>
</evidence>
<evidence type="ECO:0000269" key="9">
    <source>
    </source>
</evidence>
<evidence type="ECO:0000269" key="10">
    <source>
    </source>
</evidence>
<evidence type="ECO:0000269" key="11">
    <source>
    </source>
</evidence>
<evidence type="ECO:0000269" key="12">
    <source>
    </source>
</evidence>
<evidence type="ECO:0000269" key="13">
    <source>
    </source>
</evidence>
<evidence type="ECO:0000303" key="14">
    <source>
    </source>
</evidence>
<evidence type="ECO:0000305" key="15"/>
<evidence type="ECO:0000305" key="16">
    <source>
    </source>
</evidence>
<evidence type="ECO:0007744" key="17">
    <source>
    </source>
</evidence>
<evidence type="ECO:0007744" key="18">
    <source>
    </source>
</evidence>
<evidence type="ECO:0007744" key="19">
    <source>
    </source>
</evidence>
<evidence type="ECO:0007744" key="20">
    <source>
    </source>
</evidence>
<evidence type="ECO:0007744" key="21">
    <source>
    </source>
</evidence>
<evidence type="ECO:0007744" key="22">
    <source>
    </source>
</evidence>
<evidence type="ECO:0007744" key="23">
    <source>
    </source>
</evidence>
<evidence type="ECO:0007744" key="24">
    <source>
    </source>
</evidence>
<evidence type="ECO:0007744" key="25">
    <source>
    </source>
</evidence>
<evidence type="ECO:0007744" key="26">
    <source>
    </source>
</evidence>
<evidence type="ECO:0007829" key="27">
    <source>
        <dbReference type="PDB" id="2WX3"/>
    </source>
</evidence>
<evidence type="ECO:0007829" key="28">
    <source>
        <dbReference type="PDB" id="4B6H"/>
    </source>
</evidence>
<gene>
    <name type="primary">DCP1A</name>
    <name type="synonym">SMIF</name>
</gene>
<sequence length="582" mass="63278">MEALSRAGQEMSLAALKQHDPYITSIADLTGQVALYTFCPKANQWEKTDIEGTLFVYRRSASPYHGFTIVNRLNMHNLVEPVNKDLEFQLHEPFLLYRNASLSIYSIWFYDKNDCHRIAKLMADVVEEETRRSQQAARDKQSPSQANGCSDHRPIDILEMLSRAKDEYERNQMGDSNISSPGLQPSTQLSNLGSTETLEEMPSGSQDKSAPSGHKHLTVEELFGTSLPKEQPAVVGLDSEEMERLPGDASQKEPNSFLPFPFEQLGGAPQSETLGVPSAAHHSVQPEITTPVLITPASITQSNEKHAPTYTIPLSPVLSPTLPAEAPTAQVPPSLPRNSTMMQAVKTTPRQRSPLLNQPVPELSHASLIANQSPFRAPLNVTNTAGTSLPSVDLLQKLRLTPQHDQIQTQPLGKGAMVASFSPAAGQLATPESFIEPPSKTAAARVAASASLSNMVLAPLQSMQQNQDPEVFVQPKVLSSAIPVAGAPLVTATTTAVSSVLLAPSVFQQTVTRSSDLERKASSPSPLTIGTPESQRKPSIILSKSQLQDTLIHLIKNDSSFLSTLHEVYLQVLTKNKDNHNL</sequence>
<dbReference type="EC" id="3.6.1.62" evidence="4"/>
<dbReference type="EMBL" id="AY146651">
    <property type="protein sequence ID" value="AAN62763.1"/>
    <property type="molecule type" value="mRNA"/>
</dbReference>
<dbReference type="EMBL" id="AJ275986">
    <property type="protein sequence ID" value="CAB77023.1"/>
    <property type="molecule type" value="mRNA"/>
</dbReference>
<dbReference type="EMBL" id="AK001969">
    <property type="protein sequence ID" value="BAA92008.1"/>
    <property type="molecule type" value="mRNA"/>
</dbReference>
<dbReference type="EMBL" id="AK295205">
    <property type="protein sequence ID" value="BAG58201.1"/>
    <property type="molecule type" value="mRNA"/>
</dbReference>
<dbReference type="EMBL" id="AC097015">
    <property type="status" value="NOT_ANNOTATED_CDS"/>
    <property type="molecule type" value="Genomic_DNA"/>
</dbReference>
<dbReference type="EMBL" id="AC112218">
    <property type="status" value="NOT_ANNOTATED_CDS"/>
    <property type="molecule type" value="Genomic_DNA"/>
</dbReference>
<dbReference type="EMBL" id="BC007439">
    <property type="protein sequence ID" value="AAH07439.1"/>
    <property type="molecule type" value="mRNA"/>
</dbReference>
<dbReference type="CCDS" id="CCDS46847.2">
    <molecule id="Q9NPI6-1"/>
</dbReference>
<dbReference type="CCDS" id="CCDS74946.1">
    <molecule id="Q9NPI6-2"/>
</dbReference>
<dbReference type="RefSeq" id="NP_001277133.1">
    <molecule id="Q9NPI6-2"/>
    <property type="nucleotide sequence ID" value="NM_001290204.2"/>
</dbReference>
<dbReference type="RefSeq" id="NP_001277134.1">
    <property type="nucleotide sequence ID" value="NM_001290205.1"/>
</dbReference>
<dbReference type="RefSeq" id="NP_001277135.1">
    <property type="nucleotide sequence ID" value="NM_001290206.1"/>
</dbReference>
<dbReference type="RefSeq" id="NP_001277136.1">
    <property type="nucleotide sequence ID" value="NM_001290207.1"/>
</dbReference>
<dbReference type="RefSeq" id="NP_060873.4">
    <molecule id="Q9NPI6-1"/>
    <property type="nucleotide sequence ID" value="NM_018403.6"/>
</dbReference>
<dbReference type="PDB" id="2WX3">
    <property type="method" value="X-ray"/>
    <property type="resolution" value="2.31 A"/>
    <property type="chains" value="A/B/C=539-582"/>
</dbReference>
<dbReference type="PDB" id="4B6H">
    <property type="method" value="X-ray"/>
    <property type="resolution" value="2.60 A"/>
    <property type="chains" value="A/B=1-130"/>
</dbReference>
<dbReference type="PDBsum" id="2WX3"/>
<dbReference type="PDBsum" id="4B6H"/>
<dbReference type="SMR" id="Q9NPI6"/>
<dbReference type="BioGRID" id="120914">
    <property type="interactions" value="213"/>
</dbReference>
<dbReference type="ComplexPortal" id="CPX-2870">
    <property type="entry name" value="RNA decapping and exonuclease complex, DCP1A variant"/>
</dbReference>
<dbReference type="CORUM" id="Q9NPI6"/>
<dbReference type="DIP" id="DIP-31292N"/>
<dbReference type="FunCoup" id="Q9NPI6">
    <property type="interactions" value="2708"/>
</dbReference>
<dbReference type="IntAct" id="Q9NPI6">
    <property type="interactions" value="75"/>
</dbReference>
<dbReference type="MINT" id="Q9NPI6"/>
<dbReference type="STRING" id="9606.ENSP00000476386"/>
<dbReference type="TCDB" id="3.A.18.1.1">
    <property type="family name" value="the nuclear mrna exporter (mrna-e) family"/>
</dbReference>
<dbReference type="GlyCosmos" id="Q9NPI6">
    <property type="glycosylation" value="8 sites, 1 glycan"/>
</dbReference>
<dbReference type="GlyGen" id="Q9NPI6">
    <property type="glycosylation" value="11 sites, 1 N-linked glycan (1 site), 1 O-linked glycan (10 sites)"/>
</dbReference>
<dbReference type="iPTMnet" id="Q9NPI6"/>
<dbReference type="PhosphoSitePlus" id="Q9NPI6"/>
<dbReference type="BioMuta" id="DCP1A"/>
<dbReference type="DMDM" id="296434475"/>
<dbReference type="jPOST" id="Q9NPI6"/>
<dbReference type="MassIVE" id="Q9NPI6"/>
<dbReference type="PaxDb" id="9606-ENSP00000476046"/>
<dbReference type="PeptideAtlas" id="Q9NPI6"/>
<dbReference type="ProteomicsDB" id="82020">
    <molecule id="Q9NPI6-1"/>
</dbReference>
<dbReference type="Pumba" id="Q9NPI6"/>
<dbReference type="Antibodypedia" id="73473">
    <property type="antibodies" value="382 antibodies from 33 providers"/>
</dbReference>
<dbReference type="DNASU" id="55802"/>
<dbReference type="Ensembl" id="ENST00000294241.10">
    <molecule id="Q9NPI6-2"/>
    <property type="protein sequence ID" value="ENSP00000476046.2"/>
    <property type="gene ID" value="ENSG00000272886.6"/>
</dbReference>
<dbReference type="Ensembl" id="ENST00000610213.6">
    <molecule id="Q9NPI6-1"/>
    <property type="protein sequence ID" value="ENSP00000476386.1"/>
    <property type="gene ID" value="ENSG00000272886.6"/>
</dbReference>
<dbReference type="GeneID" id="55802"/>
<dbReference type="KEGG" id="hsa:55802"/>
<dbReference type="MANE-Select" id="ENST00000610213.6">
    <property type="protein sequence ID" value="ENSP00000476386.1"/>
    <property type="RefSeq nucleotide sequence ID" value="NM_018403.7"/>
    <property type="RefSeq protein sequence ID" value="NP_060873.4"/>
</dbReference>
<dbReference type="UCSC" id="uc021wzk.3">
    <molecule id="Q9NPI6-1"/>
    <property type="organism name" value="human"/>
</dbReference>
<dbReference type="AGR" id="HGNC:18714"/>
<dbReference type="CTD" id="55802"/>
<dbReference type="DisGeNET" id="55802"/>
<dbReference type="GeneCards" id="DCP1A"/>
<dbReference type="HGNC" id="HGNC:18714">
    <property type="gene designation" value="DCP1A"/>
</dbReference>
<dbReference type="HPA" id="ENSG00000272886">
    <property type="expression patterns" value="Low tissue specificity"/>
</dbReference>
<dbReference type="MIM" id="607010">
    <property type="type" value="gene"/>
</dbReference>
<dbReference type="neXtProt" id="NX_Q9NPI6"/>
<dbReference type="OpenTargets" id="ENSG00000272886"/>
<dbReference type="PharmGKB" id="PA134931379"/>
<dbReference type="VEuPathDB" id="HostDB:ENSG00000272886"/>
<dbReference type="eggNOG" id="KOG2868">
    <property type="taxonomic scope" value="Eukaryota"/>
</dbReference>
<dbReference type="GeneTree" id="ENSGT00940000158818"/>
<dbReference type="HOGENOM" id="CLU_030030_0_0_1"/>
<dbReference type="InParanoid" id="Q9NPI6"/>
<dbReference type="OMA" id="SASRFKM"/>
<dbReference type="OrthoDB" id="440673at2759"/>
<dbReference type="PAN-GO" id="Q9NPI6">
    <property type="GO annotations" value="4 GO annotations based on evolutionary models"/>
</dbReference>
<dbReference type="PhylomeDB" id="Q9NPI6"/>
<dbReference type="PathwayCommons" id="Q9NPI6"/>
<dbReference type="Reactome" id="R-HSA-430039">
    <property type="pathway name" value="mRNA decay by 5' to 3' exoribonuclease"/>
</dbReference>
<dbReference type="Reactome" id="R-HSA-450385">
    <property type="pathway name" value="Butyrate Response Factor 1 (BRF1) binds and destabilizes mRNA"/>
</dbReference>
<dbReference type="Reactome" id="R-HSA-450513">
    <property type="pathway name" value="Tristetraprolin (TTP, ZFP36) binds and destabilizes mRNA"/>
</dbReference>
<dbReference type="Reactome" id="R-HSA-975957">
    <property type="pathway name" value="Nonsense Mediated Decay (NMD) enhanced by the Exon Junction Complex (EJC)"/>
</dbReference>
<dbReference type="SignaLink" id="Q9NPI6"/>
<dbReference type="BioGRID-ORCS" id="55802">
    <property type="hits" value="12 hits in 229 CRISPR screens"/>
</dbReference>
<dbReference type="CD-CODE" id="232F8A39">
    <property type="entry name" value="P-body"/>
</dbReference>
<dbReference type="CD-CODE" id="278829DE">
    <property type="entry name" value="Chromatoid body"/>
</dbReference>
<dbReference type="CD-CODE" id="DEE660B4">
    <property type="entry name" value="Stress granule"/>
</dbReference>
<dbReference type="ChiTaRS" id="DCP1A">
    <property type="organism name" value="human"/>
</dbReference>
<dbReference type="EvolutionaryTrace" id="Q9NPI6"/>
<dbReference type="GeneWiki" id="DCP1A"/>
<dbReference type="GenomeRNAi" id="55802"/>
<dbReference type="Pharos" id="Q9NPI6">
    <property type="development level" value="Tbio"/>
</dbReference>
<dbReference type="PRO" id="PR:Q9NPI6"/>
<dbReference type="Proteomes" id="UP000005640">
    <property type="component" value="Chromosome 3"/>
</dbReference>
<dbReference type="RNAct" id="Q9NPI6">
    <property type="molecule type" value="protein"/>
</dbReference>
<dbReference type="Bgee" id="ENSG00000272886">
    <property type="expression patterns" value="Expressed in oocyte and 208 other cell types or tissues"/>
</dbReference>
<dbReference type="ExpressionAtlas" id="Q9NPI6">
    <property type="expression patterns" value="baseline and differential"/>
</dbReference>
<dbReference type="GO" id="GO:0005737">
    <property type="term" value="C:cytoplasm"/>
    <property type="evidence" value="ECO:0000314"/>
    <property type="project" value="AgBase"/>
</dbReference>
<dbReference type="GO" id="GO:0036464">
    <property type="term" value="C:cytoplasmic ribonucleoprotein granule"/>
    <property type="evidence" value="ECO:0000314"/>
    <property type="project" value="HPA"/>
</dbReference>
<dbReference type="GO" id="GO:0005829">
    <property type="term" value="C:cytosol"/>
    <property type="evidence" value="ECO:0000304"/>
    <property type="project" value="Reactome"/>
</dbReference>
<dbReference type="GO" id="GO:0030425">
    <property type="term" value="C:dendrite"/>
    <property type="evidence" value="ECO:0007669"/>
    <property type="project" value="Ensembl"/>
</dbReference>
<dbReference type="GO" id="GO:0016020">
    <property type="term" value="C:membrane"/>
    <property type="evidence" value="ECO:0007005"/>
    <property type="project" value="UniProtKB"/>
</dbReference>
<dbReference type="GO" id="GO:0005634">
    <property type="term" value="C:nucleus"/>
    <property type="evidence" value="ECO:0007669"/>
    <property type="project" value="UniProtKB-SubCell"/>
</dbReference>
<dbReference type="GO" id="GO:0000932">
    <property type="term" value="C:P-body"/>
    <property type="evidence" value="ECO:0000250"/>
    <property type="project" value="UniProtKB"/>
</dbReference>
<dbReference type="GO" id="GO:0140933">
    <property type="term" value="F:5'-(N(7)-methylguanosine 5'-triphospho)-[mRNA] hydrolase activity"/>
    <property type="evidence" value="ECO:0007669"/>
    <property type="project" value="RHEA"/>
</dbReference>
<dbReference type="GO" id="GO:0008047">
    <property type="term" value="F:enzyme activator activity"/>
    <property type="evidence" value="ECO:0007669"/>
    <property type="project" value="InterPro"/>
</dbReference>
<dbReference type="GO" id="GO:0042802">
    <property type="term" value="F:identical protein binding"/>
    <property type="evidence" value="ECO:0000353"/>
    <property type="project" value="IntAct"/>
</dbReference>
<dbReference type="GO" id="GO:0019894">
    <property type="term" value="F:kinesin binding"/>
    <property type="evidence" value="ECO:0007669"/>
    <property type="project" value="Ensembl"/>
</dbReference>
<dbReference type="GO" id="GO:0003729">
    <property type="term" value="F:mRNA binding"/>
    <property type="evidence" value="ECO:0000318"/>
    <property type="project" value="GO_Central"/>
</dbReference>
<dbReference type="GO" id="GO:0000290">
    <property type="term" value="P:deadenylation-dependent decapping of nuclear-transcribed mRNA"/>
    <property type="evidence" value="ECO:0000318"/>
    <property type="project" value="GO_Central"/>
</dbReference>
<dbReference type="GO" id="GO:0031087">
    <property type="term" value="P:deadenylation-independent decapping of nuclear-transcribed mRNA"/>
    <property type="evidence" value="ECO:0000318"/>
    <property type="project" value="GO_Central"/>
</dbReference>
<dbReference type="GO" id="GO:0110156">
    <property type="term" value="P:mRNA methylguanosine-cap decapping"/>
    <property type="evidence" value="ECO:0000315"/>
    <property type="project" value="UniProtKB"/>
</dbReference>
<dbReference type="GO" id="GO:0000184">
    <property type="term" value="P:nuclear-transcribed mRNA catabolic process, nonsense-mediated decay"/>
    <property type="evidence" value="ECO:0007669"/>
    <property type="project" value="UniProtKB-KW"/>
</dbReference>
<dbReference type="GO" id="GO:1903608">
    <property type="term" value="P:protein localization to cytoplasmic stress granule"/>
    <property type="evidence" value="ECO:0000315"/>
    <property type="project" value="AgBase"/>
</dbReference>
<dbReference type="CDD" id="cd09804">
    <property type="entry name" value="Dcp1"/>
    <property type="match status" value="1"/>
</dbReference>
<dbReference type="FunFam" id="2.30.29.30:FF:000097">
    <property type="entry name" value="Putative mRNA-decapping enzyme 1A"/>
    <property type="match status" value="1"/>
</dbReference>
<dbReference type="Gene3D" id="6.10.140.2030">
    <property type="match status" value="1"/>
</dbReference>
<dbReference type="Gene3D" id="2.30.29.30">
    <property type="entry name" value="Pleckstrin-homology domain (PH domain)/Phosphotyrosine-binding domain (PTB)"/>
    <property type="match status" value="1"/>
</dbReference>
<dbReference type="InterPro" id="IPR010334">
    <property type="entry name" value="Dcp1"/>
</dbReference>
<dbReference type="InterPro" id="IPR031953">
    <property type="entry name" value="mRNA_decap_C"/>
</dbReference>
<dbReference type="InterPro" id="IPR011993">
    <property type="entry name" value="PH-like_dom_sf"/>
</dbReference>
<dbReference type="PANTHER" id="PTHR16290:SF4">
    <property type="entry name" value="MRNA-DECAPPING ENZYME 1A"/>
    <property type="match status" value="1"/>
</dbReference>
<dbReference type="PANTHER" id="PTHR16290">
    <property type="entry name" value="TRANSCRIPTION FACTOR SMIF DECAPPING ENZYME DCP1"/>
    <property type="match status" value="1"/>
</dbReference>
<dbReference type="Pfam" id="PF06058">
    <property type="entry name" value="DCP1"/>
    <property type="match status" value="1"/>
</dbReference>
<dbReference type="Pfam" id="PF16741">
    <property type="entry name" value="mRNA_decap_C"/>
    <property type="match status" value="1"/>
</dbReference>
<dbReference type="SUPFAM" id="SSF50729">
    <property type="entry name" value="PH domain-like"/>
    <property type="match status" value="1"/>
</dbReference>
<protein>
    <recommendedName>
        <fullName>mRNA-decapping enzyme 1A</fullName>
        <ecNumber evidence="4">3.6.1.62</ecNumber>
    </recommendedName>
    <alternativeName>
        <fullName>Smad4-interacting transcriptional co-activator</fullName>
    </alternativeName>
    <alternativeName>
        <fullName>Transcription factor SMIF</fullName>
    </alternativeName>
</protein>
<feature type="chain" id="PRO_0000189632" description="mRNA-decapping enzyme 1A">
    <location>
        <begin position="1"/>
        <end position="582"/>
    </location>
</feature>
<feature type="region of interest" description="Disordered" evidence="2">
    <location>
        <begin position="132"/>
        <end position="154"/>
    </location>
</feature>
<feature type="region of interest" description="Disordered" evidence="2">
    <location>
        <begin position="172"/>
        <end position="214"/>
    </location>
</feature>
<feature type="region of interest" description="Disordered" evidence="2">
    <location>
        <begin position="513"/>
        <end position="536"/>
    </location>
</feature>
<feature type="compositionally biased region" description="Basic and acidic residues" evidence="2">
    <location>
        <begin position="132"/>
        <end position="141"/>
    </location>
</feature>
<feature type="compositionally biased region" description="Polar residues" evidence="2">
    <location>
        <begin position="173"/>
        <end position="196"/>
    </location>
</feature>
<feature type="compositionally biased region" description="Polar residues" evidence="2">
    <location>
        <begin position="522"/>
        <end position="533"/>
    </location>
</feature>
<feature type="modified residue" description="Phosphoserine" evidence="24">
    <location>
        <position position="62"/>
    </location>
</feature>
<feature type="modified residue" description="Phosphoserine" evidence="19">
    <location>
        <position position="142"/>
    </location>
</feature>
<feature type="modified residue" description="Phosphoserine" evidence="1">
    <location>
        <position position="179"/>
    </location>
</feature>
<feature type="modified residue" description="Phosphoserine" evidence="21">
    <location>
        <position position="180"/>
    </location>
</feature>
<feature type="modified residue" description="Phosphoserine" evidence="18 19 20 21 22 23 24">
    <location>
        <position position="315"/>
    </location>
</feature>
<feature type="modified residue" description="Phosphoserine" evidence="19 21 22">
    <location>
        <position position="319"/>
    </location>
</feature>
<feature type="modified residue" description="Phosphoserine" evidence="18 19">
    <location>
        <position position="334"/>
    </location>
</feature>
<feature type="modified residue" description="Phosphothreonine" evidence="24">
    <location>
        <position position="348"/>
    </location>
</feature>
<feature type="modified residue" description="Phosphoserine" evidence="17 19 20 22 24 26">
    <location>
        <position position="353"/>
    </location>
</feature>
<feature type="modified residue" description="Asymmetric dimethylarginine" evidence="25">
    <location>
        <position position="376"/>
    </location>
</feature>
<feature type="modified residue" description="Phosphothreonine" evidence="19 24">
    <location>
        <position position="401"/>
    </location>
</feature>
<feature type="modified residue" description="Phosphoserine" evidence="22">
    <location>
        <position position="422"/>
    </location>
</feature>
<feature type="modified residue" description="Phosphoserine" evidence="19 21 24">
    <location>
        <position position="522"/>
    </location>
</feature>
<feature type="modified residue" description="Phosphoserine" evidence="19 21 24">
    <location>
        <position position="523"/>
    </location>
</feature>
<feature type="modified residue" description="Phosphoserine" evidence="19 21 24">
    <location>
        <position position="525"/>
    </location>
</feature>
<feature type="modified residue" description="Phosphothreonine" evidence="1">
    <location>
        <position position="528"/>
    </location>
</feature>
<feature type="modified residue" description="Phosphothreonine" evidence="18 19 21 24">
    <location>
        <position position="531"/>
    </location>
</feature>
<feature type="splice variant" id="VSP_057206" description="In isoform 2." evidence="14">
    <location>
        <begin position="171"/>
        <end position="208"/>
    </location>
</feature>
<feature type="mutagenesis site" description="Lowers decapping activity." evidence="4">
    <original>D</original>
    <variation>A</variation>
    <location>
        <position position="20"/>
    </location>
</feature>
<feature type="mutagenesis site" description="Lowers decapping activity." evidence="4">
    <original>R</original>
    <variation>A</variation>
    <location>
        <position position="59"/>
    </location>
</feature>
<feature type="sequence conflict" description="In Ref. 4; AC097015/AC112218." ref="4">
    <original>P</original>
    <variation>Q</variation>
    <location>
        <position position="483"/>
    </location>
</feature>
<feature type="helix" evidence="28">
    <location>
        <begin position="1"/>
        <end position="19"/>
    </location>
</feature>
<feature type="strand" evidence="28">
    <location>
        <begin position="23"/>
        <end position="39"/>
    </location>
</feature>
<feature type="turn" evidence="28">
    <location>
        <begin position="40"/>
        <end position="43"/>
    </location>
</feature>
<feature type="strand" evidence="28">
    <location>
        <begin position="44"/>
        <end position="63"/>
    </location>
</feature>
<feature type="strand" evidence="28">
    <location>
        <begin position="65"/>
        <end position="71"/>
    </location>
</feature>
<feature type="strand" evidence="28">
    <location>
        <begin position="78"/>
        <end position="81"/>
    </location>
</feature>
<feature type="strand" evidence="28">
    <location>
        <begin position="87"/>
        <end position="91"/>
    </location>
</feature>
<feature type="strand" evidence="28">
    <location>
        <begin position="94"/>
        <end position="98"/>
    </location>
</feature>
<feature type="strand" evidence="28">
    <location>
        <begin position="104"/>
        <end position="111"/>
    </location>
</feature>
<feature type="helix" evidence="28">
    <location>
        <begin position="112"/>
        <end position="126"/>
    </location>
</feature>
<feature type="helix" evidence="27">
    <location>
        <begin position="539"/>
        <end position="557"/>
    </location>
</feature>
<feature type="helix" evidence="27">
    <location>
        <begin position="559"/>
        <end position="571"/>
    </location>
</feature>
<organism>
    <name type="scientific">Homo sapiens</name>
    <name type="common">Human</name>
    <dbReference type="NCBI Taxonomy" id="9606"/>
    <lineage>
        <taxon>Eukaryota</taxon>
        <taxon>Metazoa</taxon>
        <taxon>Chordata</taxon>
        <taxon>Craniata</taxon>
        <taxon>Vertebrata</taxon>
        <taxon>Euteleostomi</taxon>
        <taxon>Mammalia</taxon>
        <taxon>Eutheria</taxon>
        <taxon>Euarchontoglires</taxon>
        <taxon>Primates</taxon>
        <taxon>Haplorrhini</taxon>
        <taxon>Catarrhini</taxon>
        <taxon>Hominidae</taxon>
        <taxon>Homo</taxon>
    </lineage>
</organism>
<proteinExistence type="evidence at protein level"/>